<dbReference type="EMBL" id="AF481951">
    <property type="protein sequence ID" value="AAM90847.1"/>
    <property type="molecule type" value="mRNA"/>
</dbReference>
<dbReference type="SMR" id="Q8LL11"/>
<dbReference type="IntAct" id="Q8LL11">
    <property type="interactions" value="1"/>
</dbReference>
<dbReference type="GO" id="GO:0005634">
    <property type="term" value="C:nucleus"/>
    <property type="evidence" value="ECO:0007669"/>
    <property type="project" value="UniProtKB-SubCell"/>
</dbReference>
<dbReference type="GO" id="GO:0003677">
    <property type="term" value="F:DNA binding"/>
    <property type="evidence" value="ECO:0007669"/>
    <property type="project" value="UniProtKB-KW"/>
</dbReference>
<dbReference type="GO" id="GO:0003700">
    <property type="term" value="F:DNA-binding transcription factor activity"/>
    <property type="evidence" value="ECO:0007669"/>
    <property type="project" value="InterPro"/>
</dbReference>
<dbReference type="GO" id="GO:0030154">
    <property type="term" value="P:cell differentiation"/>
    <property type="evidence" value="ECO:0007669"/>
    <property type="project" value="UniProtKB-KW"/>
</dbReference>
<dbReference type="GO" id="GO:0009908">
    <property type="term" value="P:flower development"/>
    <property type="evidence" value="ECO:0007669"/>
    <property type="project" value="UniProtKB-KW"/>
</dbReference>
<dbReference type="GO" id="GO:0099402">
    <property type="term" value="P:plant organ development"/>
    <property type="evidence" value="ECO:0007669"/>
    <property type="project" value="InterPro"/>
</dbReference>
<dbReference type="CDD" id="cd00086">
    <property type="entry name" value="homeodomain"/>
    <property type="match status" value="1"/>
</dbReference>
<dbReference type="FunFam" id="1.10.10.60:FF:000118">
    <property type="entry name" value="WUSCHEL-related homeobox 11"/>
    <property type="match status" value="1"/>
</dbReference>
<dbReference type="Gene3D" id="1.10.10.60">
    <property type="entry name" value="Homeodomain-like"/>
    <property type="match status" value="1"/>
</dbReference>
<dbReference type="InterPro" id="IPR001356">
    <property type="entry name" value="HD"/>
</dbReference>
<dbReference type="InterPro" id="IPR009057">
    <property type="entry name" value="Homeodomain-like_sf"/>
</dbReference>
<dbReference type="InterPro" id="IPR044555">
    <property type="entry name" value="WUSCHEL-like"/>
</dbReference>
<dbReference type="PANTHER" id="PTHR45940:SF2">
    <property type="entry name" value="WUSCHEL-RELATED HOMEOBOX 1"/>
    <property type="match status" value="1"/>
</dbReference>
<dbReference type="PANTHER" id="PTHR45940">
    <property type="entry name" value="WUSCHEL-RELATED HOMEOBOX 1-RELATED"/>
    <property type="match status" value="1"/>
</dbReference>
<dbReference type="Pfam" id="PF00046">
    <property type="entry name" value="Homeodomain"/>
    <property type="match status" value="1"/>
</dbReference>
<dbReference type="SMART" id="SM00389">
    <property type="entry name" value="HOX"/>
    <property type="match status" value="1"/>
</dbReference>
<dbReference type="SUPFAM" id="SSF46689">
    <property type="entry name" value="Homeodomain-like"/>
    <property type="match status" value="1"/>
</dbReference>
<dbReference type="PROSITE" id="PS50071">
    <property type="entry name" value="HOMEOBOX_2"/>
    <property type="match status" value="1"/>
</dbReference>
<comment type="function">
    <text evidence="3">Transcription factor that plays a central role during developmental processes such as early embryogenesis and flowering, probably by regulating expression of specific genes. Required to specify stem cell identity in meristems, such as shoot apical meristem (SAM). Acts in parallel with HAM.</text>
</comment>
<comment type="subcellular location">
    <subcellularLocation>
        <location evidence="1">Nucleus</location>
    </subcellularLocation>
</comment>
<comment type="tissue specificity">
    <text evidence="3">In the active shoot meristem, it is specifically expressed in a small cell group underneath the presume position of stem cells.</text>
</comment>
<comment type="similarity">
    <text evidence="4">Belongs to the WUS homeobox family.</text>
</comment>
<sequence length="307" mass="35115">METAQHQQNNQQHYLHQHLSIGQGTNIEDGSNKNNSSNFMCRQNSTRWTPTTDQIRILKDLYYNNGVRSPTAEQIQRISAKLRQYGKIEGKNVFYWFQNHKARERQKKRLIAAATTDNTNLPMQMQFQRGVWRSSADDPIHHKYTNPGVHCPSASSHGVLAVGQNGNHGYGALAMEKSFRDCSISPGSSMSHHHHQNFAWAGVDPYSSTTTYPFLEKTKHFENETLEADEEQQEEDQENYYYQRTTSAIETLPLFPMHEENISSFCNLKHQESSGGFYTEWYRADDNLAAARASLELSLNSFIGNSS</sequence>
<feature type="chain" id="PRO_0000049385" description="Protein WUSCHEL">
    <location>
        <begin position="1"/>
        <end position="307"/>
    </location>
</feature>
<feature type="DNA-binding region" description="Homeobox; WUS-type" evidence="1">
    <location>
        <begin position="43"/>
        <end position="108"/>
    </location>
</feature>
<feature type="region of interest" description="Disordered" evidence="2">
    <location>
        <begin position="23"/>
        <end position="44"/>
    </location>
</feature>
<reference key="1">
    <citation type="journal article" date="2002" name="Genes Dev.">
        <title>Shoot meristem maintenance is controlled by a GRAS-gene mediated signal from differentiating cells.</title>
        <authorList>
            <person name="Stuurman J."/>
            <person name="Jaeggi F."/>
            <person name="Kuhlemeier C."/>
        </authorList>
    </citation>
    <scope>NUCLEOTIDE SEQUENCE [MRNA]</scope>
    <scope>FUNCTION</scope>
    <scope>TISSUE SPECIFICITY</scope>
    <source>
        <strain>cv. W138</strain>
    </source>
</reference>
<organism>
    <name type="scientific">Petunia hybrida</name>
    <name type="common">Petunia</name>
    <dbReference type="NCBI Taxonomy" id="4102"/>
    <lineage>
        <taxon>Eukaryota</taxon>
        <taxon>Viridiplantae</taxon>
        <taxon>Streptophyta</taxon>
        <taxon>Embryophyta</taxon>
        <taxon>Tracheophyta</taxon>
        <taxon>Spermatophyta</taxon>
        <taxon>Magnoliopsida</taxon>
        <taxon>eudicotyledons</taxon>
        <taxon>Gunneridae</taxon>
        <taxon>Pentapetalae</taxon>
        <taxon>asterids</taxon>
        <taxon>lamiids</taxon>
        <taxon>Solanales</taxon>
        <taxon>Solanaceae</taxon>
        <taxon>Petunioideae</taxon>
        <taxon>Petunia</taxon>
    </lineage>
</organism>
<accession>Q8LL11</accession>
<proteinExistence type="evidence at transcript level"/>
<gene>
    <name type="primary">WUS</name>
    <name type="synonym">TER</name>
</gene>
<evidence type="ECO:0000255" key="1">
    <source>
        <dbReference type="PROSITE-ProRule" id="PRU00108"/>
    </source>
</evidence>
<evidence type="ECO:0000256" key="2">
    <source>
        <dbReference type="SAM" id="MobiDB-lite"/>
    </source>
</evidence>
<evidence type="ECO:0000269" key="3">
    <source>
    </source>
</evidence>
<evidence type="ECO:0000305" key="4"/>
<name>WUS_PETHY</name>
<keyword id="KW-0217">Developmental protein</keyword>
<keyword id="KW-0221">Differentiation</keyword>
<keyword id="KW-0238">DNA-binding</keyword>
<keyword id="KW-0287">Flowering</keyword>
<keyword id="KW-0371">Homeobox</keyword>
<keyword id="KW-0539">Nucleus</keyword>
<keyword id="KW-0804">Transcription</keyword>
<keyword id="KW-0805">Transcription regulation</keyword>
<protein>
    <recommendedName>
        <fullName>Protein WUSCHEL</fullName>
    </recommendedName>
    <alternativeName>
        <fullName>PhWUS</fullName>
    </alternativeName>
    <alternativeName>
        <fullName>Protein TERMINATOR</fullName>
    </alternativeName>
</protein>